<comment type="function">
    <text evidence="1">Catalyzes the reversible conversion of ribose-5-phosphate to ribulose 5-phosphate.</text>
</comment>
<comment type="catalytic activity">
    <reaction evidence="1">
        <text>aldehydo-D-ribose 5-phosphate = D-ribulose 5-phosphate</text>
        <dbReference type="Rhea" id="RHEA:14657"/>
        <dbReference type="ChEBI" id="CHEBI:58121"/>
        <dbReference type="ChEBI" id="CHEBI:58273"/>
        <dbReference type="EC" id="5.3.1.6"/>
    </reaction>
</comment>
<comment type="pathway">
    <text evidence="1">Carbohydrate degradation; pentose phosphate pathway; D-ribose 5-phosphate from D-ribulose 5-phosphate (non-oxidative stage): step 1/1.</text>
</comment>
<comment type="subunit">
    <text evidence="1">Homodimer.</text>
</comment>
<comment type="similarity">
    <text evidence="1">Belongs to the ribose 5-phosphate isomerase family.</text>
</comment>
<name>RPIA_PHOPR</name>
<evidence type="ECO:0000255" key="1">
    <source>
        <dbReference type="HAMAP-Rule" id="MF_00170"/>
    </source>
</evidence>
<gene>
    <name evidence="1" type="primary">rpiA</name>
    <name type="ordered locus">PBPRA3122</name>
</gene>
<dbReference type="EC" id="5.3.1.6" evidence="1"/>
<dbReference type="EMBL" id="CR378673">
    <property type="protein sequence ID" value="CAG21437.1"/>
    <property type="molecule type" value="Genomic_DNA"/>
</dbReference>
<dbReference type="RefSeq" id="WP_011219692.1">
    <property type="nucleotide sequence ID" value="NC_006370.1"/>
</dbReference>
<dbReference type="SMR" id="Q6LMP0"/>
<dbReference type="STRING" id="298386.PBPRA3122"/>
<dbReference type="KEGG" id="ppr:PBPRA3122"/>
<dbReference type="eggNOG" id="COG0120">
    <property type="taxonomic scope" value="Bacteria"/>
</dbReference>
<dbReference type="HOGENOM" id="CLU_056590_1_1_6"/>
<dbReference type="UniPathway" id="UPA00115">
    <property type="reaction ID" value="UER00412"/>
</dbReference>
<dbReference type="Proteomes" id="UP000000593">
    <property type="component" value="Chromosome 1"/>
</dbReference>
<dbReference type="GO" id="GO:0005829">
    <property type="term" value="C:cytosol"/>
    <property type="evidence" value="ECO:0007669"/>
    <property type="project" value="TreeGrafter"/>
</dbReference>
<dbReference type="GO" id="GO:0004751">
    <property type="term" value="F:ribose-5-phosphate isomerase activity"/>
    <property type="evidence" value="ECO:0007669"/>
    <property type="project" value="UniProtKB-UniRule"/>
</dbReference>
<dbReference type="GO" id="GO:0006014">
    <property type="term" value="P:D-ribose metabolic process"/>
    <property type="evidence" value="ECO:0007669"/>
    <property type="project" value="TreeGrafter"/>
</dbReference>
<dbReference type="GO" id="GO:0009052">
    <property type="term" value="P:pentose-phosphate shunt, non-oxidative branch"/>
    <property type="evidence" value="ECO:0007669"/>
    <property type="project" value="UniProtKB-UniRule"/>
</dbReference>
<dbReference type="CDD" id="cd01398">
    <property type="entry name" value="RPI_A"/>
    <property type="match status" value="1"/>
</dbReference>
<dbReference type="FunFam" id="3.30.70.260:FF:000004">
    <property type="entry name" value="Ribose-5-phosphate isomerase A"/>
    <property type="match status" value="1"/>
</dbReference>
<dbReference type="FunFam" id="3.40.50.1360:FF:000001">
    <property type="entry name" value="Ribose-5-phosphate isomerase A"/>
    <property type="match status" value="1"/>
</dbReference>
<dbReference type="Gene3D" id="3.30.70.260">
    <property type="match status" value="1"/>
</dbReference>
<dbReference type="Gene3D" id="3.40.50.1360">
    <property type="match status" value="1"/>
</dbReference>
<dbReference type="HAMAP" id="MF_00170">
    <property type="entry name" value="Rib_5P_isom_A"/>
    <property type="match status" value="1"/>
</dbReference>
<dbReference type="InterPro" id="IPR037171">
    <property type="entry name" value="NagB/RpiA_transferase-like"/>
</dbReference>
<dbReference type="InterPro" id="IPR020672">
    <property type="entry name" value="Ribose5P_isomerase_typA_subgr"/>
</dbReference>
<dbReference type="InterPro" id="IPR004788">
    <property type="entry name" value="Ribose5P_isomerase_type_A"/>
</dbReference>
<dbReference type="NCBIfam" id="NF001924">
    <property type="entry name" value="PRK00702.1"/>
    <property type="match status" value="1"/>
</dbReference>
<dbReference type="NCBIfam" id="TIGR00021">
    <property type="entry name" value="rpiA"/>
    <property type="match status" value="1"/>
</dbReference>
<dbReference type="PANTHER" id="PTHR11934">
    <property type="entry name" value="RIBOSE-5-PHOSPHATE ISOMERASE"/>
    <property type="match status" value="1"/>
</dbReference>
<dbReference type="PANTHER" id="PTHR11934:SF0">
    <property type="entry name" value="RIBOSE-5-PHOSPHATE ISOMERASE"/>
    <property type="match status" value="1"/>
</dbReference>
<dbReference type="Pfam" id="PF06026">
    <property type="entry name" value="Rib_5-P_isom_A"/>
    <property type="match status" value="1"/>
</dbReference>
<dbReference type="SUPFAM" id="SSF75445">
    <property type="entry name" value="D-ribose-5-phosphate isomerase (RpiA), lid domain"/>
    <property type="match status" value="1"/>
</dbReference>
<dbReference type="SUPFAM" id="SSF100950">
    <property type="entry name" value="NagB/RpiA/CoA transferase-like"/>
    <property type="match status" value="1"/>
</dbReference>
<proteinExistence type="inferred from homology"/>
<protein>
    <recommendedName>
        <fullName evidence="1">Ribose-5-phosphate isomerase A</fullName>
        <ecNumber evidence="1">5.3.1.6</ecNumber>
    </recommendedName>
    <alternativeName>
        <fullName evidence="1">Phosphoriboisomerase A</fullName>
        <shortName evidence="1">PRI</shortName>
    </alternativeName>
</protein>
<keyword id="KW-0413">Isomerase</keyword>
<keyword id="KW-1185">Reference proteome</keyword>
<feature type="chain" id="PRO_0000158446" description="Ribose-5-phosphate isomerase A">
    <location>
        <begin position="1"/>
        <end position="219"/>
    </location>
</feature>
<feature type="active site" description="Proton acceptor" evidence="1">
    <location>
        <position position="103"/>
    </location>
</feature>
<feature type="binding site" evidence="1">
    <location>
        <begin position="28"/>
        <end position="31"/>
    </location>
    <ligand>
        <name>substrate</name>
    </ligand>
</feature>
<feature type="binding site" evidence="1">
    <location>
        <begin position="81"/>
        <end position="84"/>
    </location>
    <ligand>
        <name>substrate</name>
    </ligand>
</feature>
<feature type="binding site" evidence="1">
    <location>
        <begin position="94"/>
        <end position="97"/>
    </location>
    <ligand>
        <name>substrate</name>
    </ligand>
</feature>
<feature type="binding site" evidence="1">
    <location>
        <position position="121"/>
    </location>
    <ligand>
        <name>substrate</name>
    </ligand>
</feature>
<accession>Q6LMP0</accession>
<organism>
    <name type="scientific">Photobacterium profundum (strain SS9)</name>
    <dbReference type="NCBI Taxonomy" id="298386"/>
    <lineage>
        <taxon>Bacteria</taxon>
        <taxon>Pseudomonadati</taxon>
        <taxon>Pseudomonadota</taxon>
        <taxon>Gammaproteobacteria</taxon>
        <taxon>Vibrionales</taxon>
        <taxon>Vibrionaceae</taxon>
        <taxon>Photobacterium</taxon>
    </lineage>
</organism>
<sequence length="219" mass="23365">MTQDEMKKAAGWAALEYVTKGSIVGVGTGSTVNHFIDALETRKEEIKGAVSSSVASTERLEKLGIPVFEANEVAGLDIYVDGADEINAEYDMIKGGGAALTREKIVAAISDKFICIVDDTKQVDVLGQFPLPVEVIPMARSFIGRELVKLGGDPEYREGVVTDNGNIIIDVHNMAITDAKDMEKKINALPGVVTVGLFAARGADVLLVGAPEGVRKFEK</sequence>
<reference key="1">
    <citation type="journal article" date="2005" name="Science">
        <title>Life at depth: Photobacterium profundum genome sequence and expression analysis.</title>
        <authorList>
            <person name="Vezzi A."/>
            <person name="Campanaro S."/>
            <person name="D'Angelo M."/>
            <person name="Simonato F."/>
            <person name="Vitulo N."/>
            <person name="Lauro F.M."/>
            <person name="Cestaro A."/>
            <person name="Malacrida G."/>
            <person name="Simionati B."/>
            <person name="Cannata N."/>
            <person name="Romualdi C."/>
            <person name="Bartlett D.H."/>
            <person name="Valle G."/>
        </authorList>
    </citation>
    <scope>NUCLEOTIDE SEQUENCE [LARGE SCALE GENOMIC DNA]</scope>
    <source>
        <strain>ATCC BAA-1253 / SS9</strain>
    </source>
</reference>